<feature type="chain" id="PRO_0000406467" description="Transcription activator of gluconeogenesis ERT1">
    <location>
        <begin position="1"/>
        <end position="565"/>
    </location>
</feature>
<feature type="domain" description="PAS" evidence="2">
    <location>
        <begin position="445"/>
        <end position="518"/>
    </location>
</feature>
<feature type="DNA-binding region" description="Zn(2)-C6 fungal-type" evidence="3">
    <location>
        <begin position="30"/>
        <end position="58"/>
    </location>
</feature>
<feature type="region of interest" description="Disordered" evidence="4">
    <location>
        <begin position="1"/>
        <end position="25"/>
    </location>
</feature>
<feature type="region of interest" description="Disordered" evidence="4">
    <location>
        <begin position="139"/>
        <end position="175"/>
    </location>
</feature>
<feature type="region of interest" description="Disordered" evidence="4">
    <location>
        <begin position="227"/>
        <end position="279"/>
    </location>
</feature>
<feature type="compositionally biased region" description="Basic and acidic residues" evidence="4">
    <location>
        <begin position="1"/>
        <end position="20"/>
    </location>
</feature>
<feature type="compositionally biased region" description="Low complexity" evidence="4">
    <location>
        <begin position="227"/>
        <end position="245"/>
    </location>
</feature>
<feature type="compositionally biased region" description="Polar residues" evidence="4">
    <location>
        <begin position="262"/>
        <end position="277"/>
    </location>
</feature>
<sequence length="565" mass="63637">MSSDESERTVSVKQEDDSLRPKRKKTNRACNHCHKAHMTCDSGRPCKRCIQRGLDKTCEDARRKRKKYLADVPNTALLPNRLQQAETYDGTNASPTESGRSIMYQATTFQHSSTVPISYTNSINDDIYSLGFSKSHNSFLPRNQNQTQPLARSQSTFSQKQSTLPQTHSNLSSSRRTNFLSSAADLEYSTLSSILQDNFMHGNHSTSNEGTPNSITLSPALSPHALTTTVSSNTNTGTATRNMTTPDDLNYTSKRNKPYVAGSSQTPSPQDQLSNGSMEAKARISNASASIYDHQRYPKCDESINQYFLGPTESDQVSMFPDVITAIETMKASDPSVFYERNSKSALSFTIGIVPDDNHYTKNHDSVENESFYKEPEEIYAKVKKPFSYTPGYHSLIAYLRKRFNKPMLVKMAESMAAYRPSFIACTNSLKEGDLIFMEQCFQRTLLTYDNFIRVSGTPTIVWRRTGEIAYVGNEFCILTGWSKEELLGKQRKFIVELLDDKSVLEYFQLFSRIAFGDFLGATMTECTLLTPKTDVKIRTGCMWTLKRDVFGIPMMIVGNFLPIL</sequence>
<proteinExistence type="inferred from homology"/>
<gene>
    <name type="primary">ERT1</name>
    <name type="synonym">FST9</name>
    <name type="ORF">PICST_77215</name>
</gene>
<reference key="1">
    <citation type="journal article" date="2007" name="Nat. Biotechnol.">
        <title>Genome sequence of the lignocellulose-bioconverting and xylose-fermenting yeast Pichia stipitis.</title>
        <authorList>
            <person name="Jeffries T.W."/>
            <person name="Grigoriev I.V."/>
            <person name="Grimwood J."/>
            <person name="Laplaza J.M."/>
            <person name="Aerts A."/>
            <person name="Salamov A."/>
            <person name="Schmutz J."/>
            <person name="Lindquist E."/>
            <person name="Dehal P."/>
            <person name="Shapiro H."/>
            <person name="Jin Y.-S."/>
            <person name="Passoth V."/>
            <person name="Richardson P.M."/>
        </authorList>
    </citation>
    <scope>NUCLEOTIDE SEQUENCE [LARGE SCALE GENOMIC DNA]</scope>
    <source>
        <strain>ATCC 58785 / CBS 6054 / NBRC 10063 / NRRL Y-11545</strain>
    </source>
</reference>
<dbReference type="EMBL" id="CP000497">
    <property type="protein sequence ID" value="ABN65276.2"/>
    <property type="molecule type" value="Genomic_DNA"/>
</dbReference>
<dbReference type="RefSeq" id="XP_001383305.2">
    <property type="nucleotide sequence ID" value="XM_001383268.1"/>
</dbReference>
<dbReference type="SMR" id="A3LQV7"/>
<dbReference type="FunCoup" id="A3LQV7">
    <property type="interactions" value="292"/>
</dbReference>
<dbReference type="GeneID" id="4837808"/>
<dbReference type="KEGG" id="pic:PICST_77215"/>
<dbReference type="eggNOG" id="ENOG502R1M5">
    <property type="taxonomic scope" value="Eukaryota"/>
</dbReference>
<dbReference type="HOGENOM" id="CLU_010748_2_3_1"/>
<dbReference type="InParanoid" id="A3LQV7"/>
<dbReference type="OMA" id="VMTTCKL"/>
<dbReference type="OrthoDB" id="2538135at2759"/>
<dbReference type="Proteomes" id="UP000002258">
    <property type="component" value="Chromosome 3"/>
</dbReference>
<dbReference type="GO" id="GO:0005634">
    <property type="term" value="C:nucleus"/>
    <property type="evidence" value="ECO:0007669"/>
    <property type="project" value="UniProtKB-SubCell"/>
</dbReference>
<dbReference type="GO" id="GO:0001227">
    <property type="term" value="F:DNA-binding transcription repressor activity, RNA polymerase II-specific"/>
    <property type="evidence" value="ECO:0007669"/>
    <property type="project" value="EnsemblFungi"/>
</dbReference>
<dbReference type="GO" id="GO:0000977">
    <property type="term" value="F:RNA polymerase II transcription regulatory region sequence-specific DNA binding"/>
    <property type="evidence" value="ECO:0007669"/>
    <property type="project" value="TreeGrafter"/>
</dbReference>
<dbReference type="GO" id="GO:0008270">
    <property type="term" value="F:zinc ion binding"/>
    <property type="evidence" value="ECO:0007669"/>
    <property type="project" value="InterPro"/>
</dbReference>
<dbReference type="GO" id="GO:0045991">
    <property type="term" value="P:carbon catabolite activation of transcription"/>
    <property type="evidence" value="ECO:0007669"/>
    <property type="project" value="EnsemblFungi"/>
</dbReference>
<dbReference type="GO" id="GO:0045013">
    <property type="term" value="P:carbon catabolite repression of transcription"/>
    <property type="evidence" value="ECO:0007669"/>
    <property type="project" value="EnsemblFungi"/>
</dbReference>
<dbReference type="GO" id="GO:0009267">
    <property type="term" value="P:cellular response to starvation"/>
    <property type="evidence" value="ECO:0007669"/>
    <property type="project" value="TreeGrafter"/>
</dbReference>
<dbReference type="GO" id="GO:0006094">
    <property type="term" value="P:gluconeogenesis"/>
    <property type="evidence" value="ECO:0007669"/>
    <property type="project" value="UniProtKB-KW"/>
</dbReference>
<dbReference type="GO" id="GO:0045722">
    <property type="term" value="P:positive regulation of gluconeogenesis"/>
    <property type="evidence" value="ECO:0007669"/>
    <property type="project" value="EnsemblFungi"/>
</dbReference>
<dbReference type="GO" id="GO:0045944">
    <property type="term" value="P:positive regulation of transcription by RNA polymerase II"/>
    <property type="evidence" value="ECO:0007669"/>
    <property type="project" value="EnsemblFungi"/>
</dbReference>
<dbReference type="CDD" id="cd00067">
    <property type="entry name" value="GAL4"/>
    <property type="match status" value="1"/>
</dbReference>
<dbReference type="CDD" id="cd00130">
    <property type="entry name" value="PAS"/>
    <property type="match status" value="1"/>
</dbReference>
<dbReference type="Gene3D" id="4.10.240.10">
    <property type="entry name" value="Zn(2)-C6 fungal-type DNA-binding domain"/>
    <property type="match status" value="1"/>
</dbReference>
<dbReference type="InterPro" id="IPR050335">
    <property type="entry name" value="ERT1_acuK_gluconeogen_tf"/>
</dbReference>
<dbReference type="InterPro" id="IPR000014">
    <property type="entry name" value="PAS"/>
</dbReference>
<dbReference type="InterPro" id="IPR035965">
    <property type="entry name" value="PAS-like_dom_sf"/>
</dbReference>
<dbReference type="InterPro" id="IPR056751">
    <property type="entry name" value="PAS_13"/>
</dbReference>
<dbReference type="InterPro" id="IPR036864">
    <property type="entry name" value="Zn2-C6_fun-type_DNA-bd_sf"/>
</dbReference>
<dbReference type="InterPro" id="IPR001138">
    <property type="entry name" value="Zn2Cys6_DnaBD"/>
</dbReference>
<dbReference type="PANTHER" id="PTHR47659:SF1">
    <property type="entry name" value="TRANSCRIPTION ACTIVATOR OF GLUCONEOGENESIS ERT1"/>
    <property type="match status" value="1"/>
</dbReference>
<dbReference type="PANTHER" id="PTHR47659">
    <property type="entry name" value="ZN(II)2CYS6 TRANSCRIPTION FACTOR (EUROFUNG)-RELATED"/>
    <property type="match status" value="1"/>
</dbReference>
<dbReference type="Pfam" id="PF24990">
    <property type="entry name" value="PAS_13"/>
    <property type="match status" value="1"/>
</dbReference>
<dbReference type="Pfam" id="PF00172">
    <property type="entry name" value="Zn_clus"/>
    <property type="match status" value="1"/>
</dbReference>
<dbReference type="SMART" id="SM00066">
    <property type="entry name" value="GAL4"/>
    <property type="match status" value="1"/>
</dbReference>
<dbReference type="SUPFAM" id="SSF55785">
    <property type="entry name" value="PYP-like sensor domain (PAS domain)"/>
    <property type="match status" value="1"/>
</dbReference>
<dbReference type="SUPFAM" id="SSF57701">
    <property type="entry name" value="Zn2/Cys6 DNA-binding domain"/>
    <property type="match status" value="1"/>
</dbReference>
<dbReference type="PROSITE" id="PS50112">
    <property type="entry name" value="PAS"/>
    <property type="match status" value="1"/>
</dbReference>
<dbReference type="PROSITE" id="PS00463">
    <property type="entry name" value="ZN2_CY6_FUNGAL_1"/>
    <property type="match status" value="1"/>
</dbReference>
<dbReference type="PROSITE" id="PS50048">
    <property type="entry name" value="ZN2_CY6_FUNGAL_2"/>
    <property type="match status" value="1"/>
</dbReference>
<comment type="function">
    <text evidence="1">Transcription factor which regulates nonfermentable carbon utilization. Activator of gluconeogenetic genes (By similarity).</text>
</comment>
<comment type="subcellular location">
    <subcellularLocation>
        <location evidence="3">Nucleus</location>
    </subcellularLocation>
</comment>
<comment type="similarity">
    <text evidence="5">Belongs to the ERT1/acuK family.</text>
</comment>
<protein>
    <recommendedName>
        <fullName>Transcription activator of gluconeogenesis ERT1</fullName>
    </recommendedName>
</protein>
<organism>
    <name type="scientific">Scheffersomyces stipitis (strain ATCC 58785 / CBS 6054 / NBRC 10063 / NRRL Y-11545)</name>
    <name type="common">Yeast</name>
    <name type="synonym">Pichia stipitis</name>
    <dbReference type="NCBI Taxonomy" id="322104"/>
    <lineage>
        <taxon>Eukaryota</taxon>
        <taxon>Fungi</taxon>
        <taxon>Dikarya</taxon>
        <taxon>Ascomycota</taxon>
        <taxon>Saccharomycotina</taxon>
        <taxon>Pichiomycetes</taxon>
        <taxon>Debaryomycetaceae</taxon>
        <taxon>Scheffersomyces</taxon>
    </lineage>
</organism>
<accession>A3LQV7</accession>
<name>ERT1_PICST</name>
<keyword id="KW-0010">Activator</keyword>
<keyword id="KW-0238">DNA-binding</keyword>
<keyword id="KW-0312">Gluconeogenesis</keyword>
<keyword id="KW-0479">Metal-binding</keyword>
<keyword id="KW-0539">Nucleus</keyword>
<keyword id="KW-1185">Reference proteome</keyword>
<keyword id="KW-0804">Transcription</keyword>
<keyword id="KW-0805">Transcription regulation</keyword>
<keyword id="KW-0862">Zinc</keyword>
<evidence type="ECO:0000250" key="1"/>
<evidence type="ECO:0000255" key="2">
    <source>
        <dbReference type="PROSITE-ProRule" id="PRU00140"/>
    </source>
</evidence>
<evidence type="ECO:0000255" key="3">
    <source>
        <dbReference type="PROSITE-ProRule" id="PRU00227"/>
    </source>
</evidence>
<evidence type="ECO:0000256" key="4">
    <source>
        <dbReference type="SAM" id="MobiDB-lite"/>
    </source>
</evidence>
<evidence type="ECO:0000305" key="5"/>